<comment type="function">
    <text evidence="2">Component of the coat protein complex II (COPII) which promotes the formation of transport vesicles from the endoplasmic reticulum (ER). The coat has two main functions, the physical deformation of the endoplasmic reticulum membrane into vesicles and the selection of cargo molecules. It also functions as a component of the nuclear pore complex (NPC). NPC components, collectively referred to as nucleoporins (NUPs), can play the role of both NPC structural components and of docking or interaction partners for transiently associated nuclear transport factors. Sec13 is required for efficient mRNA export from the nucleus to the cytoplasm and for correct nuclear pore biogenesis and distribution (By similarity).</text>
</comment>
<comment type="subunit">
    <text evidence="2">The COPII coat is composed of at least 5 proteins: the sec23/24 complex, the sec13/31 complex, and the protein sar1. Component of the nuclear pore complex (NPC). NPC constitutes the exclusive means of nucleocytoplasmic transport. NPCs allow the passive diffusion of ions and small molecules and the active, nuclear transport receptor-mediated bidirectional transport of macromolecules such as proteins, RNAs, ribonucleoparticles (RNPs), and ribosomal subunits across the nuclear envelope. Due to its 8-fold rotational symmetry, all subunits are present with 8 copies or multiples thereof.</text>
</comment>
<comment type="subcellular location">
    <subcellularLocation>
        <location evidence="1">Cytoplasmic vesicle</location>
        <location evidence="1">COPII-coated vesicle membrane</location>
        <topology evidence="1">Peripheral membrane protein</topology>
        <orientation evidence="1">Cytoplasmic side</orientation>
    </subcellularLocation>
    <subcellularLocation>
        <location evidence="1">Endoplasmic reticulum membrane</location>
        <topology evidence="1">Peripheral membrane protein</topology>
        <orientation evidence="1">Cytoplasmic side</orientation>
    </subcellularLocation>
    <subcellularLocation>
        <location evidence="2">Nucleus</location>
        <location evidence="2">Nuclear pore complex</location>
    </subcellularLocation>
</comment>
<comment type="similarity">
    <text evidence="3">Belongs to the WD repeat SEC13 family.</text>
</comment>
<name>SEC13_ASPFU</name>
<gene>
    <name type="primary">sec13</name>
    <name type="ORF">AFUA_4G06090</name>
</gene>
<sequence length="306" mass="33877">MTRGTNLVGPFLQHDAGLDYYGRRLATCSSDKTIKIFEIEGETHRLIETLKGHEGAVWCVAWAHPKFGTILASSSYDGKVLIWREQHQNATSPVAGSTWTKVFDFSLHTASVNMVSWAPHESGCLLACASSDGHVSVLEFRDNSWTHQIFHAHGMGVNSISWAPAASPGSLISSNPGPGQQRRFVTGGSDNLLKIWDYNPESKTYNLSQTLEGHSDWVRDVAWSPSILSKSYIASASQDKTVRIWTSDASNPGQWTSQQLEFDTVLWRVSWSPSGNILAVSGGDNKVSLWKENLKGQWEKVKDIEE</sequence>
<feature type="chain" id="PRO_0000295404" description="Protein transport protein sec13">
    <location>
        <begin position="1"/>
        <end position="306"/>
    </location>
</feature>
<feature type="repeat" description="WD 1">
    <location>
        <begin position="2"/>
        <end position="47"/>
    </location>
</feature>
<feature type="repeat" description="WD 2">
    <location>
        <begin position="52"/>
        <end position="93"/>
    </location>
</feature>
<feature type="repeat" description="WD 3">
    <location>
        <begin position="107"/>
        <end position="148"/>
    </location>
</feature>
<feature type="repeat" description="WD 4">
    <location>
        <begin position="152"/>
        <end position="206"/>
    </location>
</feature>
<feature type="repeat" description="WD 5">
    <location>
        <begin position="213"/>
        <end position="255"/>
    </location>
</feature>
<feature type="repeat" description="WD 6">
    <location>
        <begin position="261"/>
        <end position="300"/>
    </location>
</feature>
<keyword id="KW-0968">Cytoplasmic vesicle</keyword>
<keyword id="KW-0256">Endoplasmic reticulum</keyword>
<keyword id="KW-0931">ER-Golgi transport</keyword>
<keyword id="KW-0472">Membrane</keyword>
<keyword id="KW-0509">mRNA transport</keyword>
<keyword id="KW-0906">Nuclear pore complex</keyword>
<keyword id="KW-0539">Nucleus</keyword>
<keyword id="KW-0653">Protein transport</keyword>
<keyword id="KW-1185">Reference proteome</keyword>
<keyword id="KW-0677">Repeat</keyword>
<keyword id="KW-0811">Translocation</keyword>
<keyword id="KW-0813">Transport</keyword>
<keyword id="KW-0853">WD repeat</keyword>
<protein>
    <recommendedName>
        <fullName>Protein transport protein sec13</fullName>
    </recommendedName>
</protein>
<evidence type="ECO:0000250" key="1"/>
<evidence type="ECO:0000250" key="2">
    <source>
        <dbReference type="UniProtKB" id="Q04491"/>
    </source>
</evidence>
<evidence type="ECO:0000305" key="3"/>
<organism>
    <name type="scientific">Aspergillus fumigatus (strain ATCC MYA-4609 / CBS 101355 / FGSC A1100 / Af293)</name>
    <name type="common">Neosartorya fumigata</name>
    <dbReference type="NCBI Taxonomy" id="330879"/>
    <lineage>
        <taxon>Eukaryota</taxon>
        <taxon>Fungi</taxon>
        <taxon>Dikarya</taxon>
        <taxon>Ascomycota</taxon>
        <taxon>Pezizomycotina</taxon>
        <taxon>Eurotiomycetes</taxon>
        <taxon>Eurotiomycetidae</taxon>
        <taxon>Eurotiales</taxon>
        <taxon>Aspergillaceae</taxon>
        <taxon>Aspergillus</taxon>
        <taxon>Aspergillus subgen. Fumigati</taxon>
    </lineage>
</organism>
<accession>Q4WNK7</accession>
<reference key="1">
    <citation type="journal article" date="2005" name="Nature">
        <title>Genomic sequence of the pathogenic and allergenic filamentous fungus Aspergillus fumigatus.</title>
        <authorList>
            <person name="Nierman W.C."/>
            <person name="Pain A."/>
            <person name="Anderson M.J."/>
            <person name="Wortman J.R."/>
            <person name="Kim H.S."/>
            <person name="Arroyo J."/>
            <person name="Berriman M."/>
            <person name="Abe K."/>
            <person name="Archer D.B."/>
            <person name="Bermejo C."/>
            <person name="Bennett J.W."/>
            <person name="Bowyer P."/>
            <person name="Chen D."/>
            <person name="Collins M."/>
            <person name="Coulsen R."/>
            <person name="Davies R."/>
            <person name="Dyer P.S."/>
            <person name="Farman M.L."/>
            <person name="Fedorova N."/>
            <person name="Fedorova N.D."/>
            <person name="Feldblyum T.V."/>
            <person name="Fischer R."/>
            <person name="Fosker N."/>
            <person name="Fraser A."/>
            <person name="Garcia J.L."/>
            <person name="Garcia M.J."/>
            <person name="Goble A."/>
            <person name="Goldman G.H."/>
            <person name="Gomi K."/>
            <person name="Griffith-Jones S."/>
            <person name="Gwilliam R."/>
            <person name="Haas B.J."/>
            <person name="Haas H."/>
            <person name="Harris D.E."/>
            <person name="Horiuchi H."/>
            <person name="Huang J."/>
            <person name="Humphray S."/>
            <person name="Jimenez J."/>
            <person name="Keller N."/>
            <person name="Khouri H."/>
            <person name="Kitamoto K."/>
            <person name="Kobayashi T."/>
            <person name="Konzack S."/>
            <person name="Kulkarni R."/>
            <person name="Kumagai T."/>
            <person name="Lafton A."/>
            <person name="Latge J.-P."/>
            <person name="Li W."/>
            <person name="Lord A."/>
            <person name="Lu C."/>
            <person name="Majoros W.H."/>
            <person name="May G.S."/>
            <person name="Miller B.L."/>
            <person name="Mohamoud Y."/>
            <person name="Molina M."/>
            <person name="Monod M."/>
            <person name="Mouyna I."/>
            <person name="Mulligan S."/>
            <person name="Murphy L.D."/>
            <person name="O'Neil S."/>
            <person name="Paulsen I."/>
            <person name="Penalva M.A."/>
            <person name="Pertea M."/>
            <person name="Price C."/>
            <person name="Pritchard B.L."/>
            <person name="Quail M.A."/>
            <person name="Rabbinowitsch E."/>
            <person name="Rawlins N."/>
            <person name="Rajandream M.A."/>
            <person name="Reichard U."/>
            <person name="Renauld H."/>
            <person name="Robson G.D."/>
            <person name="Rodriguez de Cordoba S."/>
            <person name="Rodriguez-Pena J.M."/>
            <person name="Ronning C.M."/>
            <person name="Rutter S."/>
            <person name="Salzberg S.L."/>
            <person name="Sanchez M."/>
            <person name="Sanchez-Ferrero J.C."/>
            <person name="Saunders D."/>
            <person name="Seeger K."/>
            <person name="Squares R."/>
            <person name="Squares S."/>
            <person name="Takeuchi M."/>
            <person name="Tekaia F."/>
            <person name="Turner G."/>
            <person name="Vazquez de Aldana C.R."/>
            <person name="Weidman J."/>
            <person name="White O."/>
            <person name="Woodward J.R."/>
            <person name="Yu J.-H."/>
            <person name="Fraser C.M."/>
            <person name="Galagan J.E."/>
            <person name="Asai K."/>
            <person name="Machida M."/>
            <person name="Hall N."/>
            <person name="Barrell B.G."/>
            <person name="Denning D.W."/>
        </authorList>
    </citation>
    <scope>NUCLEOTIDE SEQUENCE [LARGE SCALE GENOMIC DNA]</scope>
    <source>
        <strain>ATCC MYA-4609 / CBS 101355 / FGSC A1100 / Af293</strain>
    </source>
</reference>
<dbReference type="EMBL" id="AAHF01000005">
    <property type="protein sequence ID" value="EAL90177.1"/>
    <property type="molecule type" value="Genomic_DNA"/>
</dbReference>
<dbReference type="RefSeq" id="XP_752215.1">
    <property type="nucleotide sequence ID" value="XM_747122.1"/>
</dbReference>
<dbReference type="SMR" id="Q4WNK7"/>
<dbReference type="FunCoup" id="Q4WNK7">
    <property type="interactions" value="1069"/>
</dbReference>
<dbReference type="STRING" id="330879.Q4WNK7"/>
<dbReference type="EnsemblFungi" id="EAL90177">
    <property type="protein sequence ID" value="EAL90177"/>
    <property type="gene ID" value="AFUA_4G06090"/>
</dbReference>
<dbReference type="GeneID" id="3509651"/>
<dbReference type="KEGG" id="afm:AFUA_4G06090"/>
<dbReference type="eggNOG" id="KOG1332">
    <property type="taxonomic scope" value="Eukaryota"/>
</dbReference>
<dbReference type="HOGENOM" id="CLU_032441_0_1_1"/>
<dbReference type="InParanoid" id="Q4WNK7"/>
<dbReference type="OMA" id="IWKEEGD"/>
<dbReference type="OrthoDB" id="364224at2759"/>
<dbReference type="Proteomes" id="UP000002530">
    <property type="component" value="Chromosome 4"/>
</dbReference>
<dbReference type="GO" id="GO:0030127">
    <property type="term" value="C:COPII vesicle coat"/>
    <property type="evidence" value="ECO:0000318"/>
    <property type="project" value="GO_Central"/>
</dbReference>
<dbReference type="GO" id="GO:0005789">
    <property type="term" value="C:endoplasmic reticulum membrane"/>
    <property type="evidence" value="ECO:0007669"/>
    <property type="project" value="UniProtKB-SubCell"/>
</dbReference>
<dbReference type="GO" id="GO:0061700">
    <property type="term" value="C:GATOR2 complex"/>
    <property type="evidence" value="ECO:0007669"/>
    <property type="project" value="EnsemblFungi"/>
</dbReference>
<dbReference type="GO" id="GO:0031080">
    <property type="term" value="C:nuclear pore outer ring"/>
    <property type="evidence" value="ECO:0000318"/>
    <property type="project" value="GO_Central"/>
</dbReference>
<dbReference type="GO" id="GO:0005198">
    <property type="term" value="F:structural molecule activity"/>
    <property type="evidence" value="ECO:0000318"/>
    <property type="project" value="GO_Central"/>
</dbReference>
<dbReference type="GO" id="GO:0090114">
    <property type="term" value="P:COPII-coated vesicle budding"/>
    <property type="evidence" value="ECO:0000318"/>
    <property type="project" value="GO_Central"/>
</dbReference>
<dbReference type="GO" id="GO:0036503">
    <property type="term" value="P:ERAD pathway"/>
    <property type="evidence" value="ECO:0007669"/>
    <property type="project" value="EnsemblFungi"/>
</dbReference>
<dbReference type="GO" id="GO:0051028">
    <property type="term" value="P:mRNA transport"/>
    <property type="evidence" value="ECO:0007669"/>
    <property type="project" value="UniProtKB-KW"/>
</dbReference>
<dbReference type="GO" id="GO:0051664">
    <property type="term" value="P:nuclear pore localization"/>
    <property type="evidence" value="ECO:0007669"/>
    <property type="project" value="EnsemblFungi"/>
</dbReference>
<dbReference type="GO" id="GO:0045893">
    <property type="term" value="P:positive regulation of DNA-templated transcription"/>
    <property type="evidence" value="ECO:0007669"/>
    <property type="project" value="EnsemblFungi"/>
</dbReference>
<dbReference type="GO" id="GO:1902953">
    <property type="term" value="P:positive regulation of ER to Golgi vesicle-mediated transport"/>
    <property type="evidence" value="ECO:0007669"/>
    <property type="project" value="EnsemblFungi"/>
</dbReference>
<dbReference type="GO" id="GO:0070863">
    <property type="term" value="P:positive regulation of protein exit from endoplasmic reticulum"/>
    <property type="evidence" value="ECO:0007669"/>
    <property type="project" value="EnsemblFungi"/>
</dbReference>
<dbReference type="GO" id="GO:0032008">
    <property type="term" value="P:positive regulation of TOR signaling"/>
    <property type="evidence" value="ECO:0000318"/>
    <property type="project" value="GO_Central"/>
</dbReference>
<dbReference type="GO" id="GO:1904263">
    <property type="term" value="P:positive regulation of TORC1 signaling"/>
    <property type="evidence" value="ECO:0007669"/>
    <property type="project" value="EnsemblFungi"/>
</dbReference>
<dbReference type="GO" id="GO:0032527">
    <property type="term" value="P:protein exit from endoplasmic reticulum"/>
    <property type="evidence" value="ECO:0000318"/>
    <property type="project" value="GO_Central"/>
</dbReference>
<dbReference type="GO" id="GO:0006606">
    <property type="term" value="P:protein import into nucleus"/>
    <property type="evidence" value="ECO:0000318"/>
    <property type="project" value="GO_Central"/>
</dbReference>
<dbReference type="FunFam" id="2.130.10.10:FF:000017">
    <property type="entry name" value="SEC13 homolog (S. cerevisiae)"/>
    <property type="match status" value="1"/>
</dbReference>
<dbReference type="Gene3D" id="2.130.10.10">
    <property type="entry name" value="YVTN repeat-like/Quinoprotein amine dehydrogenase"/>
    <property type="match status" value="1"/>
</dbReference>
<dbReference type="InterPro" id="IPR020472">
    <property type="entry name" value="G-protein_beta_WD-40_rep"/>
</dbReference>
<dbReference type="InterPro" id="IPR037363">
    <property type="entry name" value="Sec13/Seh1_fam"/>
</dbReference>
<dbReference type="InterPro" id="IPR015943">
    <property type="entry name" value="WD40/YVTN_repeat-like_dom_sf"/>
</dbReference>
<dbReference type="InterPro" id="IPR036322">
    <property type="entry name" value="WD40_repeat_dom_sf"/>
</dbReference>
<dbReference type="InterPro" id="IPR001680">
    <property type="entry name" value="WD40_rpt"/>
</dbReference>
<dbReference type="PANTHER" id="PTHR11024">
    <property type="entry name" value="NUCLEAR PORE COMPLEX PROTEIN SEC13 / SEH1 FAMILY MEMBER"/>
    <property type="match status" value="1"/>
</dbReference>
<dbReference type="PANTHER" id="PTHR11024:SF2">
    <property type="entry name" value="PROTEIN SEC13 HOMOLOG"/>
    <property type="match status" value="1"/>
</dbReference>
<dbReference type="Pfam" id="PF00400">
    <property type="entry name" value="WD40"/>
    <property type="match status" value="6"/>
</dbReference>
<dbReference type="PRINTS" id="PR00320">
    <property type="entry name" value="GPROTEINBRPT"/>
</dbReference>
<dbReference type="SMART" id="SM00320">
    <property type="entry name" value="WD40"/>
    <property type="match status" value="6"/>
</dbReference>
<dbReference type="SUPFAM" id="SSF50978">
    <property type="entry name" value="WD40 repeat-like"/>
    <property type="match status" value="1"/>
</dbReference>
<dbReference type="PROSITE" id="PS50082">
    <property type="entry name" value="WD_REPEATS_2"/>
    <property type="match status" value="4"/>
</dbReference>
<dbReference type="PROSITE" id="PS50294">
    <property type="entry name" value="WD_REPEATS_REGION"/>
    <property type="match status" value="1"/>
</dbReference>
<proteinExistence type="inferred from homology"/>